<sequence>MGKQEDAELVIIPFPFSGHILATIELAKRLISQDNPRIHTITILYWGLPFIPQADTIAFLRSLVKNEPRIRLVTLPEVQDPPPMELFVEFAESYILEYVKKMVPIIREALSTLLSSRDESGSVRVAGLVLDFFCVPMIDVGNEFNLPSYIFLTCSAGFLGMMKYLPERHREIKSEFNRSFNEELNLIPGYVNSVPTKVLPSGLFMKETYEPWVELAERFPEAKGILVNSYTALEPNGFKYFDRCPDNYPTIYPIGPILCSNDRPNLDSSERDRIITWLDDQPESSVVFLCFGSLKNLSATQINEIAQALEIVDCKFIWSFRTNPKEYASPYEALPHGFMDRVMDQGIVCGWAPQVEILAHKAVGGFVSHCGWNSILESLGFGVPIATWPMYAEQQLNAFTMVKELGLALEMRLDYVSEDGDIVKADEIAGTVRSLMDGVDVPKSKVKEIAEAGKEAVDGGSSFLAVKRFIGDLIDGVSISK</sequence>
<protein>
    <recommendedName>
        <fullName evidence="7">Flavonol 3-O-glucosyltransferase UGT71C1</fullName>
        <ecNumber evidence="4">2.4.1.91</ecNumber>
    </recommendedName>
    <alternativeName>
        <fullName evidence="7">Flavonol 7-O-beta-glucosyltransferase UGT71C1</fullName>
        <ecNumber evidence="4">2.4.1.237</ecNumber>
    </alternativeName>
    <alternativeName>
        <fullName evidence="6">UDP-glycosyltransferase 71C1</fullName>
    </alternativeName>
</protein>
<reference key="1">
    <citation type="journal article" date="1999" name="Nature">
        <title>Sequence and analysis of chromosome 2 of the plant Arabidopsis thaliana.</title>
        <authorList>
            <person name="Lin X."/>
            <person name="Kaul S."/>
            <person name="Rounsley S.D."/>
            <person name="Shea T.P."/>
            <person name="Benito M.-I."/>
            <person name="Town C.D."/>
            <person name="Fujii C.Y."/>
            <person name="Mason T.M."/>
            <person name="Bowman C.L."/>
            <person name="Barnstead M.E."/>
            <person name="Feldblyum T.V."/>
            <person name="Buell C.R."/>
            <person name="Ketchum K.A."/>
            <person name="Lee J.J."/>
            <person name="Ronning C.M."/>
            <person name="Koo H.L."/>
            <person name="Moffat K.S."/>
            <person name="Cronin L.A."/>
            <person name="Shen M."/>
            <person name="Pai G."/>
            <person name="Van Aken S."/>
            <person name="Umayam L."/>
            <person name="Tallon L.J."/>
            <person name="Gill J.E."/>
            <person name="Adams M.D."/>
            <person name="Carrera A.J."/>
            <person name="Creasy T.H."/>
            <person name="Goodman H.M."/>
            <person name="Somerville C.R."/>
            <person name="Copenhaver G.P."/>
            <person name="Preuss D."/>
            <person name="Nierman W.C."/>
            <person name="White O."/>
            <person name="Eisen J.A."/>
            <person name="Salzberg S.L."/>
            <person name="Fraser C.M."/>
            <person name="Venter J.C."/>
        </authorList>
    </citation>
    <scope>NUCLEOTIDE SEQUENCE [LARGE SCALE GENOMIC DNA]</scope>
    <source>
        <strain>cv. Columbia</strain>
    </source>
</reference>
<reference key="2">
    <citation type="journal article" date="2017" name="Plant J.">
        <title>Araport11: a complete reannotation of the Arabidopsis thaliana reference genome.</title>
        <authorList>
            <person name="Cheng C.Y."/>
            <person name="Krishnakumar V."/>
            <person name="Chan A.P."/>
            <person name="Thibaud-Nissen F."/>
            <person name="Schobel S."/>
            <person name="Town C.D."/>
        </authorList>
    </citation>
    <scope>GENOME REANNOTATION</scope>
    <source>
        <strain>cv. Columbia</strain>
    </source>
</reference>
<reference key="3">
    <citation type="submission" date="2005-05" db="EMBL/GenBank/DDBJ databases">
        <title>Arabidopsis ORF clones.</title>
        <authorList>
            <person name="Kim C.J."/>
            <person name="Chen H."/>
            <person name="Cheuk R.F."/>
            <person name="Shinn P."/>
            <person name="Ecker J.R."/>
        </authorList>
    </citation>
    <scope>NUCLEOTIDE SEQUENCE [LARGE SCALE MRNA]</scope>
    <source>
        <strain>cv. Columbia</strain>
    </source>
</reference>
<reference key="4">
    <citation type="submission" date="2006-08" db="EMBL/GenBank/DDBJ databases">
        <title>Arabidopsis ORF Clones.</title>
        <authorList>
            <person name="Quinitio C."/>
            <person name="Chen H."/>
            <person name="Kim C.J."/>
            <person name="Shinn P."/>
            <person name="Ecker J.R."/>
        </authorList>
    </citation>
    <scope>NUCLEOTIDE SEQUENCE [LARGE SCALE MRNA]</scope>
    <source>
        <strain>cv. Columbia</strain>
    </source>
</reference>
<reference key="5">
    <citation type="journal article" date="2001" name="J. Biol. Chem.">
        <title>Phylogenetic analysis of the UDP-glycosyltransferase multigene family of Arabidopsis thaliana.</title>
        <authorList>
            <person name="Li Y."/>
            <person name="Baldauf S."/>
            <person name="Lim E.K."/>
            <person name="Bowles D.J."/>
        </authorList>
    </citation>
    <scope>GENE FAMILY</scope>
</reference>
<reference key="6">
    <citation type="journal article" date="2002" name="J. Biol. Chem.">
        <title>The activity of Arabidopsis glycosyltransferases toward salicylic acid, 4-hydroxybenzoic acid, and other benzoates.</title>
        <authorList>
            <person name="Lim E.K."/>
            <person name="Doucet C.J."/>
            <person name="Li Y."/>
            <person name="Elias L."/>
            <person name="Worrall D."/>
            <person name="Spencer S.P."/>
            <person name="Ross J."/>
            <person name="Bowles D.J."/>
        </authorList>
    </citation>
    <scope>FUNCTION</scope>
</reference>
<reference key="7">
    <citation type="journal article" date="2004" name="Biotechnol. Bioeng.">
        <title>Arabidopsis glycosyltransferases as biocatalysts in fermentation for regioselective synthesis of diverse quercetin glucosides.</title>
        <authorList>
            <person name="Lim E.K."/>
            <person name="Ashford D.A."/>
            <person name="Hou B."/>
            <person name="Jackson R.G."/>
            <person name="Bowles D.J."/>
        </authorList>
    </citation>
    <scope>FUNCTION</scope>
    <scope>CATALYTIC ACTIVITY</scope>
</reference>
<reference key="8">
    <citation type="journal article" date="2009" name="Phytochemistry">
        <title>Substrate specificities of family 1 UGTs gained by domain swapping.</title>
        <authorList>
            <person name="Hansen E.H."/>
            <person name="Osmani S.A."/>
            <person name="Kristensen C."/>
            <person name="Moeller B.L."/>
            <person name="Hansen J."/>
        </authorList>
    </citation>
    <scope>FUNCTION</scope>
    <scope>BIOPHYSICOCHEMICAL PROPERTIES</scope>
</reference>
<evidence type="ECO:0000250" key="1">
    <source>
        <dbReference type="UniProtKB" id="A0A0A1HA03"/>
    </source>
</evidence>
<evidence type="ECO:0000250" key="2">
    <source>
        <dbReference type="UniProtKB" id="P51094"/>
    </source>
</evidence>
<evidence type="ECO:0000269" key="3">
    <source>
    </source>
</evidence>
<evidence type="ECO:0000269" key="4">
    <source>
    </source>
</evidence>
<evidence type="ECO:0000269" key="5">
    <source>
    </source>
</evidence>
<evidence type="ECO:0000303" key="6">
    <source>
    </source>
</evidence>
<evidence type="ECO:0000305" key="7"/>
<evidence type="ECO:0000312" key="8">
    <source>
        <dbReference type="Araport" id="AT2G29750"/>
    </source>
</evidence>
<evidence type="ECO:0000312" key="9">
    <source>
        <dbReference type="EMBL" id="AAC35226.1"/>
    </source>
</evidence>
<comment type="function">
    <text evidence="3 4 5">Possesses quercetin 7-O-glucosyltransferase and 3'-O-glucosyltransferase activities in vitro. Also active in vitro on benzoates and benzoate derivatives. Glucosylates other secondary metabolites in vitro like trans-resveratrol, curcumin, vanillin and etoposide.</text>
</comment>
<comment type="catalytic activity">
    <reaction evidence="4">
        <text>a flavonol + UDP-alpha-D-glucose = a flavonol 3-O-beta-D-glucoside + UDP + H(+)</text>
        <dbReference type="Rhea" id="RHEA:22300"/>
        <dbReference type="ChEBI" id="CHEBI:15378"/>
        <dbReference type="ChEBI" id="CHEBI:16816"/>
        <dbReference type="ChEBI" id="CHEBI:28802"/>
        <dbReference type="ChEBI" id="CHEBI:58223"/>
        <dbReference type="ChEBI" id="CHEBI:58885"/>
        <dbReference type="EC" id="2.4.1.91"/>
    </reaction>
</comment>
<comment type="catalytic activity">
    <reaction evidence="4">
        <text>a 7-O-hydroxy-flavonol + UDP-alpha-D-glucose = a flavonol 7-O-beta-D-glucoside + UDP + H(+)</text>
        <dbReference type="Rhea" id="RHEA:23164"/>
        <dbReference type="ChEBI" id="CHEBI:15378"/>
        <dbReference type="ChEBI" id="CHEBI:52144"/>
        <dbReference type="ChEBI" id="CHEBI:52267"/>
        <dbReference type="ChEBI" id="CHEBI:58223"/>
        <dbReference type="ChEBI" id="CHEBI:58885"/>
        <dbReference type="EC" id="2.4.1.237"/>
    </reaction>
</comment>
<comment type="biophysicochemical properties">
    <kinetics>
        <KM evidence="5">0.15 mM for curcumin</KM>
        <KM evidence="5">0.5 mM for trans-resveratrol</KM>
        <KM evidence="5">1.12 mM for vanillin</KM>
        <KM evidence="5">2.7 mM for etoposide</KM>
        <Vmax evidence="5">1.2 umol/min/mg enzyme towards vanillin</Vmax>
        <Vmax evidence="5">0.063 umol/min/mg enzyme towards trans-resveratrol</Vmax>
        <Vmax evidence="5">0.022 umol/min/mg enzyme towards curcumin</Vmax>
        <Vmax evidence="5">0.013 umol/min/mg enzyme towards etoposide</Vmax>
    </kinetics>
</comment>
<comment type="similarity">
    <text evidence="7">Belongs to the UDP-glycosyltransferase family.</text>
</comment>
<name>U71C1_ARATH</name>
<keyword id="KW-0328">Glycosyltransferase</keyword>
<keyword id="KW-1185">Reference proteome</keyword>
<keyword id="KW-0808">Transferase</keyword>
<dbReference type="EC" id="2.4.1.91" evidence="4"/>
<dbReference type="EC" id="2.4.1.237" evidence="4"/>
<dbReference type="EMBL" id="AC005496">
    <property type="protein sequence ID" value="AAC35226.1"/>
    <property type="molecule type" value="Genomic_DNA"/>
</dbReference>
<dbReference type="EMBL" id="CP002685">
    <property type="protein sequence ID" value="AEC08300.1"/>
    <property type="molecule type" value="Genomic_DNA"/>
</dbReference>
<dbReference type="EMBL" id="BT023426">
    <property type="protein sequence ID" value="AAY56417.1"/>
    <property type="molecule type" value="mRNA"/>
</dbReference>
<dbReference type="EMBL" id="BT026458">
    <property type="protein sequence ID" value="ABH04565.1"/>
    <property type="molecule type" value="mRNA"/>
</dbReference>
<dbReference type="PIR" id="B84700">
    <property type="entry name" value="B84700"/>
</dbReference>
<dbReference type="RefSeq" id="NP_180536.1">
    <property type="nucleotide sequence ID" value="NM_128529.3"/>
</dbReference>
<dbReference type="SMR" id="O82381"/>
<dbReference type="FunCoup" id="O82381">
    <property type="interactions" value="427"/>
</dbReference>
<dbReference type="STRING" id="3702.O82381"/>
<dbReference type="CAZy" id="GT1">
    <property type="family name" value="Glycosyltransferase Family 1"/>
</dbReference>
<dbReference type="PaxDb" id="3702-AT2G29750.1"/>
<dbReference type="ProteomicsDB" id="228536"/>
<dbReference type="EnsemblPlants" id="AT2G29750.1">
    <property type="protein sequence ID" value="AT2G29750.1"/>
    <property type="gene ID" value="AT2G29750"/>
</dbReference>
<dbReference type="GeneID" id="817525"/>
<dbReference type="Gramene" id="AT2G29750.1">
    <property type="protein sequence ID" value="AT2G29750.1"/>
    <property type="gene ID" value="AT2G29750"/>
</dbReference>
<dbReference type="KEGG" id="ath:AT2G29750"/>
<dbReference type="Araport" id="AT2G29750"/>
<dbReference type="TAIR" id="AT2G29750">
    <property type="gene designation" value="UGT71C1"/>
</dbReference>
<dbReference type="eggNOG" id="KOG1192">
    <property type="taxonomic scope" value="Eukaryota"/>
</dbReference>
<dbReference type="HOGENOM" id="CLU_001724_3_2_1"/>
<dbReference type="InParanoid" id="O82381"/>
<dbReference type="OMA" id="QNDASNM"/>
<dbReference type="PhylomeDB" id="O82381"/>
<dbReference type="BRENDA" id="2.4.1.128">
    <property type="organism ID" value="399"/>
</dbReference>
<dbReference type="SABIO-RK" id="O82381"/>
<dbReference type="PRO" id="PR:O82381"/>
<dbReference type="Proteomes" id="UP000006548">
    <property type="component" value="Chromosome 2"/>
</dbReference>
<dbReference type="ExpressionAtlas" id="O82381">
    <property type="expression patterns" value="baseline and differential"/>
</dbReference>
<dbReference type="GO" id="GO:0047893">
    <property type="term" value="F:flavonol 3-O-glucosyltransferase activity"/>
    <property type="evidence" value="ECO:0007669"/>
    <property type="project" value="UniProtKB-EC"/>
</dbReference>
<dbReference type="GO" id="GO:0033836">
    <property type="term" value="F:flavonol 7-O-beta-glucosyltransferase activity"/>
    <property type="evidence" value="ECO:0007669"/>
    <property type="project" value="UniProtKB-EC"/>
</dbReference>
<dbReference type="GO" id="GO:0080045">
    <property type="term" value="F:quercetin 3'-O-glucosyltransferase activity"/>
    <property type="evidence" value="ECO:0000314"/>
    <property type="project" value="TAIR"/>
</dbReference>
<dbReference type="GO" id="GO:0080044">
    <property type="term" value="F:quercetin 7-O-glucosyltransferase activity"/>
    <property type="evidence" value="ECO:0000314"/>
    <property type="project" value="TAIR"/>
</dbReference>
<dbReference type="GO" id="GO:0035251">
    <property type="term" value="F:UDP-glucosyltransferase activity"/>
    <property type="evidence" value="ECO:0000314"/>
    <property type="project" value="TAIR"/>
</dbReference>
<dbReference type="CDD" id="cd03784">
    <property type="entry name" value="GT1_Gtf-like"/>
    <property type="match status" value="1"/>
</dbReference>
<dbReference type="FunFam" id="3.40.50.2000:FF:000056">
    <property type="entry name" value="Glycosyltransferase"/>
    <property type="match status" value="1"/>
</dbReference>
<dbReference type="FunFam" id="3.40.50.2000:FF:000080">
    <property type="entry name" value="Glycosyltransferase"/>
    <property type="match status" value="1"/>
</dbReference>
<dbReference type="Gene3D" id="3.40.50.2000">
    <property type="entry name" value="Glycogen Phosphorylase B"/>
    <property type="match status" value="2"/>
</dbReference>
<dbReference type="InterPro" id="IPR050481">
    <property type="entry name" value="UDP-glycosyltransf_plant"/>
</dbReference>
<dbReference type="InterPro" id="IPR002213">
    <property type="entry name" value="UDP_glucos_trans"/>
</dbReference>
<dbReference type="InterPro" id="IPR035595">
    <property type="entry name" value="UDP_glycos_trans_CS"/>
</dbReference>
<dbReference type="PANTHER" id="PTHR48048">
    <property type="entry name" value="GLYCOSYLTRANSFERASE"/>
    <property type="match status" value="1"/>
</dbReference>
<dbReference type="PANTHER" id="PTHR48048:SF45">
    <property type="entry name" value="GLYCOSYLTRANSFERASE"/>
    <property type="match status" value="1"/>
</dbReference>
<dbReference type="Pfam" id="PF00201">
    <property type="entry name" value="UDPGT"/>
    <property type="match status" value="1"/>
</dbReference>
<dbReference type="SUPFAM" id="SSF53756">
    <property type="entry name" value="UDP-Glycosyltransferase/glycogen phosphorylase"/>
    <property type="match status" value="1"/>
</dbReference>
<dbReference type="PROSITE" id="PS00375">
    <property type="entry name" value="UDPGT"/>
    <property type="match status" value="1"/>
</dbReference>
<feature type="chain" id="PRO_0000409053" description="Flavonol 3-O-glucosyltransferase UGT71C1">
    <location>
        <begin position="1"/>
        <end position="481"/>
    </location>
</feature>
<feature type="active site" description="Proton acceptor" evidence="1">
    <location>
        <position position="19"/>
    </location>
</feature>
<feature type="active site" description="Charge relay" evidence="1">
    <location>
        <position position="131"/>
    </location>
</feature>
<feature type="binding site" evidence="2">
    <location>
        <position position="19"/>
    </location>
    <ligand>
        <name>an anthocyanidin</name>
        <dbReference type="ChEBI" id="CHEBI:143576"/>
    </ligand>
</feature>
<feature type="binding site" evidence="1">
    <location>
        <position position="153"/>
    </location>
    <ligand>
        <name>UDP-alpha-D-glucose</name>
        <dbReference type="ChEBI" id="CHEBI:58885"/>
    </ligand>
</feature>
<feature type="binding site" evidence="1">
    <location>
        <position position="352"/>
    </location>
    <ligand>
        <name>UDP-alpha-D-glucose</name>
        <dbReference type="ChEBI" id="CHEBI:58885"/>
    </ligand>
</feature>
<feature type="binding site" evidence="1">
    <location>
        <position position="354"/>
    </location>
    <ligand>
        <name>UDP-alpha-D-glucose</name>
        <dbReference type="ChEBI" id="CHEBI:58885"/>
    </ligand>
</feature>
<feature type="binding site" evidence="1">
    <location>
        <position position="369"/>
    </location>
    <ligand>
        <name>UDP-alpha-D-glucose</name>
        <dbReference type="ChEBI" id="CHEBI:58885"/>
    </ligand>
</feature>
<feature type="binding site" evidence="1">
    <location>
        <position position="372"/>
    </location>
    <ligand>
        <name>UDP-alpha-D-glucose</name>
        <dbReference type="ChEBI" id="CHEBI:58885"/>
    </ligand>
</feature>
<feature type="binding site" evidence="1">
    <location>
        <position position="373"/>
    </location>
    <ligand>
        <name>UDP-alpha-D-glucose</name>
        <dbReference type="ChEBI" id="CHEBI:58885"/>
    </ligand>
</feature>
<feature type="binding site" evidence="1">
    <location>
        <position position="374"/>
    </location>
    <ligand>
        <name>UDP-alpha-D-glucose</name>
        <dbReference type="ChEBI" id="CHEBI:58885"/>
    </ligand>
</feature>
<feature type="binding site" evidence="1">
    <location>
        <position position="377"/>
    </location>
    <ligand>
        <name>UDP-alpha-D-glucose</name>
        <dbReference type="ChEBI" id="CHEBI:58885"/>
    </ligand>
</feature>
<feature type="binding site" evidence="2">
    <location>
        <position position="392"/>
    </location>
    <ligand>
        <name>an anthocyanidin</name>
        <dbReference type="ChEBI" id="CHEBI:143576"/>
    </ligand>
</feature>
<feature type="binding site" evidence="1">
    <location>
        <position position="393"/>
    </location>
    <ligand>
        <name>UDP-alpha-D-glucose</name>
        <dbReference type="ChEBI" id="CHEBI:58885"/>
    </ligand>
</feature>
<feature type="binding site" evidence="1">
    <location>
        <position position="394"/>
    </location>
    <ligand>
        <name>UDP-alpha-D-glucose</name>
        <dbReference type="ChEBI" id="CHEBI:58885"/>
    </ligand>
</feature>
<accession>O82381</accession>
<gene>
    <name evidence="6" type="primary">UGT71C1</name>
    <name evidence="8" type="ordered locus">At2g29750</name>
    <name evidence="9" type="ORF">T27A16.15</name>
</gene>
<organism>
    <name type="scientific">Arabidopsis thaliana</name>
    <name type="common">Mouse-ear cress</name>
    <dbReference type="NCBI Taxonomy" id="3702"/>
    <lineage>
        <taxon>Eukaryota</taxon>
        <taxon>Viridiplantae</taxon>
        <taxon>Streptophyta</taxon>
        <taxon>Embryophyta</taxon>
        <taxon>Tracheophyta</taxon>
        <taxon>Spermatophyta</taxon>
        <taxon>Magnoliopsida</taxon>
        <taxon>eudicotyledons</taxon>
        <taxon>Gunneridae</taxon>
        <taxon>Pentapetalae</taxon>
        <taxon>rosids</taxon>
        <taxon>malvids</taxon>
        <taxon>Brassicales</taxon>
        <taxon>Brassicaceae</taxon>
        <taxon>Camelineae</taxon>
        <taxon>Arabidopsis</taxon>
    </lineage>
</organism>
<proteinExistence type="evidence at protein level"/>